<protein>
    <recommendedName>
        <fullName>Serine/threonine-protein kinase/endoribonuclease ire-1</fullName>
    </recommendedName>
    <alternativeName>
        <fullName>Inositol-requiring protein 2</fullName>
    </alternativeName>
    <domain>
        <recommendedName>
            <fullName>Serine/threonine-protein kinase</fullName>
            <ecNumber>2.7.11.1</ecNumber>
        </recommendedName>
    </domain>
    <domain>
        <recommendedName>
            <fullName>Endoribonuclease</fullName>
            <ecNumber>3.1.26.-</ecNumber>
        </recommendedName>
    </domain>
</protein>
<name>IRE1_CAEEL</name>
<reference key="1">
    <citation type="journal article" date="2001" name="Cell">
        <title>Complementary signaling pathways regulate the unfolded protein response and are required for C. elegans development.</title>
        <authorList>
            <person name="Shen X."/>
            <person name="Ellis R.E."/>
            <person name="Lee K."/>
            <person name="Liu C.-Y."/>
            <person name="Yang K."/>
            <person name="Solomon A."/>
            <person name="Yoshida H."/>
            <person name="Morimoto R."/>
            <person name="Kurnit D.M."/>
            <person name="Mori K."/>
            <person name="Kaufman R.J."/>
        </authorList>
    </citation>
    <scope>NUCLEOTIDE SEQUENCE [MRNA]</scope>
    <scope>FUNCTION</scope>
    <scope>SUBCELLULAR LOCATION</scope>
</reference>
<reference key="2">
    <citation type="journal article" date="1998" name="Science">
        <title>Genome sequence of the nematode C. elegans: a platform for investigating biology.</title>
        <authorList>
            <consortium name="The C. elegans sequencing consortium"/>
        </authorList>
    </citation>
    <scope>NUCLEOTIDE SEQUENCE [LARGE SCALE GENOMIC DNA]</scope>
    <source>
        <strain>Bristol N2</strain>
    </source>
</reference>
<reference evidence="12" key="3">
    <citation type="journal article" date="2005" name="PLoS Genet.">
        <title>Genetic interactions due to constitutive and inducible gene regulation mediated by the unfolded protein response in C. elegans.</title>
        <authorList>
            <person name="Shen X."/>
            <person name="Ellis R.E."/>
            <person name="Sakaki K."/>
            <person name="Kaufman R.J."/>
        </authorList>
    </citation>
    <scope>FUNCTION</scope>
    <scope>DISRUPTION PHENOTYPE</scope>
</reference>
<reference key="4">
    <citation type="journal article" date="2008" name="Mol. Biol. Cell">
        <title>APY-1, a novel Caenorhabditis elegans apyrase involved in unfolded protein response signalling and stress responses.</title>
        <authorList>
            <person name="Uccelletti D."/>
            <person name="Pascoli A."/>
            <person name="Farina F."/>
            <person name="Alberti A."/>
            <person name="Mancini P."/>
            <person name="Hirschberg C.B."/>
            <person name="Palleschi C."/>
        </authorList>
    </citation>
    <scope>FUNCTION</scope>
    <scope>MUTAGENESIS OF GLY-723</scope>
</reference>
<reference key="5">
    <citation type="journal article" date="2010" name="Mol. Cell. Biol.">
        <title>Protein misfolding induces hypoxic preconditioning via a subset of the unfolded protein response machinery.</title>
        <authorList>
            <person name="Mao X.R."/>
            <person name="Crowder C.M."/>
        </authorList>
    </citation>
    <scope>FUNCTION</scope>
    <scope>MUTAGENESIS OF GLY-723</scope>
</reference>
<reference key="6">
    <citation type="journal article" date="2013" name="Mol. Cell. Biol.">
        <title>A specific set of exon junction complex subunits is required for the nuclear retention of unspliced RNAs in Caenorhabditis elegans.</title>
        <authorList>
            <person name="Shiimori M."/>
            <person name="Inoue K."/>
            <person name="Sakamoto H."/>
        </authorList>
    </citation>
    <scope>FUNCTION</scope>
    <scope>DISRUPTION PHENOTYPE</scope>
</reference>
<dbReference type="EC" id="2.7.11.1"/>
<dbReference type="EC" id="3.1.26.-"/>
<dbReference type="EMBL" id="AF435952">
    <property type="protein sequence ID" value="AAL30828.1"/>
    <property type="molecule type" value="mRNA"/>
</dbReference>
<dbReference type="EMBL" id="BX284602">
    <property type="protein sequence ID" value="CAA88100.2"/>
    <property type="molecule type" value="Genomic_DNA"/>
</dbReference>
<dbReference type="PIR" id="T19874">
    <property type="entry name" value="T19874"/>
</dbReference>
<dbReference type="RefSeq" id="NP_001254135.1">
    <property type="nucleotide sequence ID" value="NM_001267206.4"/>
</dbReference>
<dbReference type="SMR" id="Q09499"/>
<dbReference type="BioGRID" id="39634">
    <property type="interactions" value="4"/>
</dbReference>
<dbReference type="FunCoup" id="Q09499">
    <property type="interactions" value="1593"/>
</dbReference>
<dbReference type="STRING" id="6239.C41C4.4a.1"/>
<dbReference type="GlyCosmos" id="Q09499">
    <property type="glycosylation" value="2 sites, No reported glycans"/>
</dbReference>
<dbReference type="iPTMnet" id="Q09499"/>
<dbReference type="PaxDb" id="6239-C41C4.4a"/>
<dbReference type="PeptideAtlas" id="Q09499"/>
<dbReference type="EnsemblMetazoa" id="C41C4.4a.1">
    <property type="protein sequence ID" value="C41C4.4a.1"/>
    <property type="gene ID" value="WBGene00002147"/>
</dbReference>
<dbReference type="GeneID" id="174305"/>
<dbReference type="KEGG" id="cel:CELE_C41C4.4"/>
<dbReference type="UCSC" id="C41C4.4">
    <property type="organism name" value="c. elegans"/>
</dbReference>
<dbReference type="AGR" id="WB:WBGene00002147"/>
<dbReference type="CTD" id="174305"/>
<dbReference type="WormBase" id="C41C4.4a">
    <property type="protein sequence ID" value="CE35836"/>
    <property type="gene ID" value="WBGene00002147"/>
    <property type="gene designation" value="ire-1"/>
</dbReference>
<dbReference type="eggNOG" id="KOG1027">
    <property type="taxonomic scope" value="Eukaryota"/>
</dbReference>
<dbReference type="GeneTree" id="ENSGT00940000167966"/>
<dbReference type="HOGENOM" id="CLU_004875_1_1_1"/>
<dbReference type="InParanoid" id="Q09499"/>
<dbReference type="OMA" id="TSLHNQW"/>
<dbReference type="OrthoDB" id="63989at2759"/>
<dbReference type="PhylomeDB" id="Q09499"/>
<dbReference type="Reactome" id="R-CEL-381070">
    <property type="pathway name" value="IRE1alpha activates chaperones"/>
</dbReference>
<dbReference type="PRO" id="PR:Q09499"/>
<dbReference type="Proteomes" id="UP000001940">
    <property type="component" value="Chromosome II"/>
</dbReference>
<dbReference type="Bgee" id="WBGene00002147">
    <property type="expression patterns" value="Expressed in germ line (C elegans) and 4 other cell types or tissues"/>
</dbReference>
<dbReference type="ExpressionAtlas" id="Q09499">
    <property type="expression patterns" value="baseline and differential"/>
</dbReference>
<dbReference type="GO" id="GO:0005789">
    <property type="term" value="C:endoplasmic reticulum membrane"/>
    <property type="evidence" value="ECO:0000250"/>
    <property type="project" value="WormBase"/>
</dbReference>
<dbReference type="GO" id="GO:1990604">
    <property type="term" value="C:IRE1-TRAF2-ASK1 complex"/>
    <property type="evidence" value="ECO:0000318"/>
    <property type="project" value="GO_Central"/>
</dbReference>
<dbReference type="GO" id="GO:0043025">
    <property type="term" value="C:neuronal cell body"/>
    <property type="evidence" value="ECO:0000315"/>
    <property type="project" value="WormBase"/>
</dbReference>
<dbReference type="GO" id="GO:0005524">
    <property type="term" value="F:ATP binding"/>
    <property type="evidence" value="ECO:0007669"/>
    <property type="project" value="UniProtKB-KW"/>
</dbReference>
<dbReference type="GO" id="GO:0106310">
    <property type="term" value="F:protein serine kinase activity"/>
    <property type="evidence" value="ECO:0007669"/>
    <property type="project" value="RHEA"/>
</dbReference>
<dbReference type="GO" id="GO:0004674">
    <property type="term" value="F:protein serine/threonine kinase activity"/>
    <property type="evidence" value="ECO:0000250"/>
    <property type="project" value="WormBase"/>
</dbReference>
<dbReference type="GO" id="GO:0004521">
    <property type="term" value="F:RNA endonuclease activity"/>
    <property type="evidence" value="ECO:0000315"/>
    <property type="project" value="WormBase"/>
</dbReference>
<dbReference type="GO" id="GO:0051082">
    <property type="term" value="F:unfolded protein binding"/>
    <property type="evidence" value="ECO:0000318"/>
    <property type="project" value="GO_Central"/>
</dbReference>
<dbReference type="GO" id="GO:0008340">
    <property type="term" value="P:determination of adult lifespan"/>
    <property type="evidence" value="ECO:0000315"/>
    <property type="project" value="WormBase"/>
</dbReference>
<dbReference type="GO" id="GO:0030968">
    <property type="term" value="P:endoplasmic reticulum unfolded protein response"/>
    <property type="evidence" value="ECO:0000315"/>
    <property type="project" value="WormBase"/>
</dbReference>
<dbReference type="GO" id="GO:0072332">
    <property type="term" value="P:intrinsic apoptotic signaling pathway by p53 class mediator"/>
    <property type="evidence" value="ECO:0000269"/>
    <property type="project" value="WormBase"/>
</dbReference>
<dbReference type="GO" id="GO:0070059">
    <property type="term" value="P:intrinsic apoptotic signaling pathway in response to endoplasmic reticulum stress"/>
    <property type="evidence" value="ECO:0000318"/>
    <property type="project" value="GO_Central"/>
</dbReference>
<dbReference type="GO" id="GO:0036498">
    <property type="term" value="P:IRE1-mediated unfolded protein response"/>
    <property type="evidence" value="ECO:0000315"/>
    <property type="project" value="WormBase"/>
</dbReference>
<dbReference type="GO" id="GO:0006397">
    <property type="term" value="P:mRNA processing"/>
    <property type="evidence" value="ECO:0007669"/>
    <property type="project" value="InterPro"/>
</dbReference>
<dbReference type="GO" id="GO:0051241">
    <property type="term" value="P:negative regulation of multicellular organismal process"/>
    <property type="evidence" value="ECO:0000315"/>
    <property type="project" value="WormBase"/>
</dbReference>
<dbReference type="GO" id="GO:0002119">
    <property type="term" value="P:nematode larval development"/>
    <property type="evidence" value="ECO:0000316"/>
    <property type="project" value="WormBase"/>
</dbReference>
<dbReference type="GO" id="GO:0090304">
    <property type="term" value="P:nucleic acid metabolic process"/>
    <property type="evidence" value="ECO:0000250"/>
    <property type="project" value="WormBase"/>
</dbReference>
<dbReference type="GO" id="GO:0045944">
    <property type="term" value="P:positive regulation of transcription by RNA polymerase II"/>
    <property type="evidence" value="ECO:0000315"/>
    <property type="project" value="WormBase"/>
</dbReference>
<dbReference type="GO" id="GO:0034976">
    <property type="term" value="P:response to endoplasmic reticulum stress"/>
    <property type="evidence" value="ECO:0000315"/>
    <property type="project" value="UniProtKB"/>
</dbReference>
<dbReference type="GO" id="GO:0001666">
    <property type="term" value="P:response to hypoxia"/>
    <property type="evidence" value="ECO:0000315"/>
    <property type="project" value="UniProtKB"/>
</dbReference>
<dbReference type="GO" id="GO:0035966">
    <property type="term" value="P:response to topologically incorrect protein"/>
    <property type="evidence" value="ECO:0000315"/>
    <property type="project" value="WormBase"/>
</dbReference>
<dbReference type="CDD" id="cd09769">
    <property type="entry name" value="Luminal_IRE1"/>
    <property type="match status" value="1"/>
</dbReference>
<dbReference type="CDD" id="cd10422">
    <property type="entry name" value="RNase_Ire1"/>
    <property type="match status" value="1"/>
</dbReference>
<dbReference type="FunFam" id="3.30.200.20:FF:000077">
    <property type="entry name" value="Putative Serine/threonine-protein kinase/endoribonuclease IRE1"/>
    <property type="match status" value="1"/>
</dbReference>
<dbReference type="FunFam" id="1.10.510.10:FF:002167">
    <property type="entry name" value="Serine/threonine-protein kinase/endoribonuclease ire-1"/>
    <property type="match status" value="1"/>
</dbReference>
<dbReference type="FunFam" id="2.130.10.10:FF:002119">
    <property type="entry name" value="Serine/threonine-protein kinase/endoribonuclease ire-1"/>
    <property type="match status" value="1"/>
</dbReference>
<dbReference type="FunFam" id="1.20.1440.180:FF:000001">
    <property type="entry name" value="Serine/threonine-protein kinase/endoribonuclease IRE1"/>
    <property type="match status" value="1"/>
</dbReference>
<dbReference type="Gene3D" id="1.20.1440.180">
    <property type="entry name" value="KEN domain"/>
    <property type="match status" value="1"/>
</dbReference>
<dbReference type="Gene3D" id="3.30.200.20">
    <property type="entry name" value="Phosphorylase Kinase, domain 1"/>
    <property type="match status" value="1"/>
</dbReference>
<dbReference type="Gene3D" id="1.10.510.10">
    <property type="entry name" value="Transferase(Phosphotransferase) domain 1"/>
    <property type="match status" value="1"/>
</dbReference>
<dbReference type="Gene3D" id="2.130.10.10">
    <property type="entry name" value="YVTN repeat-like/Quinoprotein amine dehydrogenase"/>
    <property type="match status" value="1"/>
</dbReference>
<dbReference type="InterPro" id="IPR045133">
    <property type="entry name" value="IRE1/2-like"/>
</dbReference>
<dbReference type="InterPro" id="IPR010513">
    <property type="entry name" value="KEN_dom"/>
</dbReference>
<dbReference type="InterPro" id="IPR038357">
    <property type="entry name" value="KEN_sf"/>
</dbReference>
<dbReference type="InterPro" id="IPR011009">
    <property type="entry name" value="Kinase-like_dom_sf"/>
</dbReference>
<dbReference type="InterPro" id="IPR018391">
    <property type="entry name" value="PQQ_b-propeller_rpt"/>
</dbReference>
<dbReference type="InterPro" id="IPR000719">
    <property type="entry name" value="Prot_kinase_dom"/>
</dbReference>
<dbReference type="InterPro" id="IPR011047">
    <property type="entry name" value="Quinoprotein_ADH-like_sf"/>
</dbReference>
<dbReference type="InterPro" id="IPR008271">
    <property type="entry name" value="Ser/Thr_kinase_AS"/>
</dbReference>
<dbReference type="InterPro" id="IPR015943">
    <property type="entry name" value="WD40/YVTN_repeat-like_dom_sf"/>
</dbReference>
<dbReference type="PANTHER" id="PTHR13954">
    <property type="entry name" value="IRE1-RELATED"/>
    <property type="match status" value="1"/>
</dbReference>
<dbReference type="PANTHER" id="PTHR13954:SF6">
    <property type="entry name" value="NON-SPECIFIC SERINE_THREONINE PROTEIN KINASE"/>
    <property type="match status" value="1"/>
</dbReference>
<dbReference type="Pfam" id="PF00069">
    <property type="entry name" value="Pkinase"/>
    <property type="match status" value="1"/>
</dbReference>
<dbReference type="Pfam" id="PF06479">
    <property type="entry name" value="Ribonuc_2-5A"/>
    <property type="match status" value="1"/>
</dbReference>
<dbReference type="SMART" id="SM00564">
    <property type="entry name" value="PQQ"/>
    <property type="match status" value="5"/>
</dbReference>
<dbReference type="SMART" id="SM00580">
    <property type="entry name" value="PUG"/>
    <property type="match status" value="1"/>
</dbReference>
<dbReference type="SMART" id="SM00220">
    <property type="entry name" value="S_TKc"/>
    <property type="match status" value="1"/>
</dbReference>
<dbReference type="SUPFAM" id="SSF56112">
    <property type="entry name" value="Protein kinase-like (PK-like)"/>
    <property type="match status" value="1"/>
</dbReference>
<dbReference type="SUPFAM" id="SSF50998">
    <property type="entry name" value="Quinoprotein alcohol dehydrogenase-like"/>
    <property type="match status" value="1"/>
</dbReference>
<dbReference type="PROSITE" id="PS51392">
    <property type="entry name" value="KEN"/>
    <property type="match status" value="1"/>
</dbReference>
<dbReference type="PROSITE" id="PS50011">
    <property type="entry name" value="PROTEIN_KINASE_DOM"/>
    <property type="match status" value="1"/>
</dbReference>
<dbReference type="PROSITE" id="PS00108">
    <property type="entry name" value="PROTEIN_KINASE_ST"/>
    <property type="match status" value="1"/>
</dbReference>
<organism>
    <name type="scientific">Caenorhabditis elegans</name>
    <dbReference type="NCBI Taxonomy" id="6239"/>
    <lineage>
        <taxon>Eukaryota</taxon>
        <taxon>Metazoa</taxon>
        <taxon>Ecdysozoa</taxon>
        <taxon>Nematoda</taxon>
        <taxon>Chromadorea</taxon>
        <taxon>Rhabditida</taxon>
        <taxon>Rhabditina</taxon>
        <taxon>Rhabditomorpha</taxon>
        <taxon>Rhabditoidea</taxon>
        <taxon>Rhabditidae</taxon>
        <taxon>Peloderinae</taxon>
        <taxon>Caenorhabditis</taxon>
    </lineage>
</organism>
<sequence>MRATFHLFTFIFLLLFSSVICISTPGFRNDHESIGDDEEKTSSTILVSTIDGRLRALDSETGEIKWTLQEEPVLRSPSAVKQGFTFLPNPLDGSLYVLKNSSLKKLPFNIPQLVHASPCKGNDGILYAGSKKDVWFGIDPKTGLKVETLSSASADRICPANQKQTIFLGRTEYRVSMFDEKNRGKTWNATFNDYSAHLLPEVNTWPFKHYASSSHGYILTFDRETGEMRWEQDLKQPVVALYLLRDDGLHKLPFEVMGKETMENVAKNIFTVDQWPTVLGVNAADPQTTSLTNQFFPALFVGESSFGLYAIEALVDHQTITYSPKLLGPPLLEGPAPIALTEMEKEEYLPPRRPIIRNIPPSITHKTSDGEYLLLGYHDRPMMTMATIIPTRYPVPGPHKAIGSTIERPPPQLLGPVEPQKHEDTSFILLLLNNHPIPFYATLVTMFALLLTVIWQCGRQWDQQKSTSRMDSFEIVNNPGESRSAQTSKQSNRGSFGWANRKIEIPEGWMAVGSKLMYSPSDILGTGCEGTVVYRGTFDGREVAVKRVVSEFVKFAHREADLLRESDTHPHVIRYFCMESDSQFRYLALELCIASLNDYVEQKEVQQNVTIALRDIMKQATDGLAHLHASKIVHRDMKPQNVLITMASQRGEMRAVISDFGLCKRVQPGKNSISRGIASGLAGTDGWIAPEVLISASTSYPVDIFSLGCIFYYVLTSGTHPFGKSLHRQANIVNGEYTLNKLADLDDWSLADDLISSMLNVEPLHRLTADAVLNHPFFWTSEKRLAYFSDVSDRVEKEEDNSPVVRRIETDARIVVCGGWREKICDALKEDLRKFRTYKSFSVRDLLRAMRNKKHHYRELPEDVRQSLGDIPDQFLHYFTSRFPRLLLHVYKATEYCSGEAVFKRYYSDDVRARMYPIVEEEERVRKKIKEEMANEVWARAPKPVEQRTPLKLDKRNIKKKSNPNTD</sequence>
<evidence type="ECO:0000250" key="1"/>
<evidence type="ECO:0000255" key="2"/>
<evidence type="ECO:0000255" key="3">
    <source>
        <dbReference type="PROSITE-ProRule" id="PRU00159"/>
    </source>
</evidence>
<evidence type="ECO:0000255" key="4">
    <source>
        <dbReference type="PROSITE-ProRule" id="PRU00725"/>
    </source>
</evidence>
<evidence type="ECO:0000255" key="5">
    <source>
        <dbReference type="PROSITE-ProRule" id="PRU10027"/>
    </source>
</evidence>
<evidence type="ECO:0000256" key="6">
    <source>
        <dbReference type="SAM" id="MobiDB-lite"/>
    </source>
</evidence>
<evidence type="ECO:0000269" key="7">
    <source>
    </source>
</evidence>
<evidence type="ECO:0000269" key="8">
    <source>
    </source>
</evidence>
<evidence type="ECO:0000269" key="9">
    <source>
    </source>
</evidence>
<evidence type="ECO:0000269" key="10">
    <source>
    </source>
</evidence>
<evidence type="ECO:0000269" key="11">
    <source>
    </source>
</evidence>
<evidence type="ECO:0000305" key="12"/>
<evidence type="ECO:0000312" key="13">
    <source>
        <dbReference type="WormBase" id="C41C4.4a"/>
    </source>
</evidence>
<proteinExistence type="evidence at protein level"/>
<gene>
    <name evidence="13" type="primary">ire-1</name>
    <name evidence="13" type="ORF">C41C4.4</name>
</gene>
<comment type="function">
    <text evidence="7 8 9 10 11">Senses unfolded proteins in the lumen of the endoplasmic reticulum via its N-terminal domain which leads to enzyme auto-activation (PubMed:11779465). The active endoribonuclease domain splices xbp-1 precursor mRNA to produce the mature form which then induces transcription of UPR target genes (PubMed:11779465). Unfolded protein response (UPR) transcriptional activation by ire-1, as well as translational attenuation by pek-1 in a complementary pathway, maintains ER homeostasis (PubMed:11779465, PubMed:16184190). Regulates the transcriptional up-regulation of nucleoside-diphosphatase apy-1 and many other genes, upon ER stress (PubMed:16184190, PubMed:18216284). By activating the UPR pathway during non-lethal hypoxia pre-conditioning, confers adaptive protection to subsequent exposure to hypoxia (PubMed:20733002). ire-1 and pek-1 are redundant genes that control a pathway essential for larval development and survival (PubMed:11779465, PubMed:16184190). Plays a role in the nuclear retention of unspliced mRNAs (PubMed:23149939).</text>
</comment>
<comment type="catalytic activity">
    <reaction>
        <text>L-seryl-[protein] + ATP = O-phospho-L-seryl-[protein] + ADP + H(+)</text>
        <dbReference type="Rhea" id="RHEA:17989"/>
        <dbReference type="Rhea" id="RHEA-COMP:9863"/>
        <dbReference type="Rhea" id="RHEA-COMP:11604"/>
        <dbReference type="ChEBI" id="CHEBI:15378"/>
        <dbReference type="ChEBI" id="CHEBI:29999"/>
        <dbReference type="ChEBI" id="CHEBI:30616"/>
        <dbReference type="ChEBI" id="CHEBI:83421"/>
        <dbReference type="ChEBI" id="CHEBI:456216"/>
        <dbReference type="EC" id="2.7.11.1"/>
    </reaction>
</comment>
<comment type="catalytic activity">
    <reaction>
        <text>L-threonyl-[protein] + ATP = O-phospho-L-threonyl-[protein] + ADP + H(+)</text>
        <dbReference type="Rhea" id="RHEA:46608"/>
        <dbReference type="Rhea" id="RHEA-COMP:11060"/>
        <dbReference type="Rhea" id="RHEA-COMP:11605"/>
        <dbReference type="ChEBI" id="CHEBI:15378"/>
        <dbReference type="ChEBI" id="CHEBI:30013"/>
        <dbReference type="ChEBI" id="CHEBI:30616"/>
        <dbReference type="ChEBI" id="CHEBI:61977"/>
        <dbReference type="ChEBI" id="CHEBI:456216"/>
        <dbReference type="EC" id="2.7.11.1"/>
    </reaction>
</comment>
<comment type="cofactor">
    <cofactor evidence="1">
        <name>Mg(2+)</name>
        <dbReference type="ChEBI" id="CHEBI:18420"/>
    </cofactor>
</comment>
<comment type="activity regulation">
    <text evidence="1">The kinase domain is activated by trans-autophosphorylation. Kinase activity is required for activation of the endoribonuclease domain (By similarity).</text>
</comment>
<comment type="subcellular location">
    <subcellularLocation>
        <location evidence="7">Endoplasmic reticulum membrane</location>
        <topology evidence="7">Single-pass type I membrane protein</topology>
    </subcellularLocation>
</comment>
<comment type="PTM">
    <text evidence="1">Autophosphorylated mainly on serine residues.</text>
</comment>
<comment type="disruption phenotype">
    <text evidence="8 11">In combination with RNAi-mediated knockdown of atf-6, causes sluggish movement, arrested development at the L2 larval stage, and lethality soon thereafter; larvae have intestinal degeneration and develop many vacuoles in the intestinal cells (PubMed:16184190). In combination with RNAi-mediated knockdown of pek-1, larvae have intestinal degeneration and develop many vacuoles in the intestinal cells (PubMed:16184190). RNAi-mediated knockdown restores fertility, reduces the accumulation of unspliced tra-2 in the cytoplasm and suppresses germ line masculinization caused by RNAi-mediated knockdown of rnp-4/RBM8A (PubMed:23149939).</text>
</comment>
<comment type="similarity">
    <text evidence="3">Belongs to the protein kinase superfamily. Ser/Thr protein kinase family.</text>
</comment>
<feature type="signal peptide" evidence="2">
    <location>
        <begin position="1"/>
        <end position="21"/>
    </location>
</feature>
<feature type="chain" id="PRO_0000024390" description="Serine/threonine-protein kinase/endoribonuclease ire-1">
    <location>
        <begin position="22"/>
        <end position="967"/>
    </location>
</feature>
<feature type="topological domain" description="Lumenal" evidence="2">
    <location>
        <begin position="22"/>
        <end position="438"/>
    </location>
</feature>
<feature type="transmembrane region" description="Helical" evidence="2">
    <location>
        <begin position="439"/>
        <end position="455"/>
    </location>
</feature>
<feature type="topological domain" description="Cytoplasmic" evidence="2">
    <location>
        <begin position="456"/>
        <end position="967"/>
    </location>
</feature>
<feature type="domain" description="Protein kinase" evidence="3">
    <location>
        <begin position="518"/>
        <end position="778"/>
    </location>
</feature>
<feature type="domain" description="KEN" evidence="4">
    <location>
        <begin position="781"/>
        <end position="909"/>
    </location>
</feature>
<feature type="region of interest" description="Disordered" evidence="6">
    <location>
        <begin position="474"/>
        <end position="494"/>
    </location>
</feature>
<feature type="region of interest" description="Disordered" evidence="6">
    <location>
        <begin position="948"/>
        <end position="967"/>
    </location>
</feature>
<feature type="compositionally biased region" description="Polar residues" evidence="6">
    <location>
        <begin position="479"/>
        <end position="494"/>
    </location>
</feature>
<feature type="compositionally biased region" description="Basic residues" evidence="6">
    <location>
        <begin position="957"/>
        <end position="967"/>
    </location>
</feature>
<feature type="active site" description="Proton acceptor" evidence="3 5">
    <location>
        <position position="636"/>
    </location>
</feature>
<feature type="binding site" evidence="3">
    <location>
        <begin position="524"/>
        <end position="532"/>
    </location>
    <ligand>
        <name>ATP</name>
        <dbReference type="ChEBI" id="CHEBI:30616"/>
    </ligand>
</feature>
<feature type="binding site" evidence="3">
    <location>
        <position position="546"/>
    </location>
    <ligand>
        <name>ATP</name>
        <dbReference type="ChEBI" id="CHEBI:30616"/>
    </ligand>
</feature>
<feature type="modified residue" description="Phosphoserine; by autocatalysis" evidence="1">
    <location>
        <position position="672"/>
    </location>
</feature>
<feature type="glycosylation site" description="N-linked (GlcNAc...) asparagine" evidence="2">
    <location>
        <position position="100"/>
    </location>
</feature>
<feature type="glycosylation site" description="N-linked (GlcNAc...) asparagine" evidence="2">
    <location>
        <position position="188"/>
    </location>
</feature>
<feature type="mutagenesis site" description="In zc14; loss of adaptive protection conferred by non-lethal hypoxia treatment. Prevents transcriptional up-regulation of apy-1 upon ER stress. Reduced UDPase activity upon ER stress." evidence="9 10">
    <original>G</original>
    <variation>R</variation>
    <location>
        <position position="723"/>
    </location>
</feature>
<accession>Q09499</accession>
<accession>Q8WRG0</accession>
<keyword id="KW-0067">ATP-binding</keyword>
<keyword id="KW-0256">Endoplasmic reticulum</keyword>
<keyword id="KW-0325">Glycoprotein</keyword>
<keyword id="KW-0378">Hydrolase</keyword>
<keyword id="KW-0418">Kinase</keyword>
<keyword id="KW-0472">Membrane</keyword>
<keyword id="KW-0511">Multifunctional enzyme</keyword>
<keyword id="KW-0547">Nucleotide-binding</keyword>
<keyword id="KW-0597">Phosphoprotein</keyword>
<keyword id="KW-1185">Reference proteome</keyword>
<keyword id="KW-0723">Serine/threonine-protein kinase</keyword>
<keyword id="KW-0732">Signal</keyword>
<keyword id="KW-0346">Stress response</keyword>
<keyword id="KW-0808">Transferase</keyword>
<keyword id="KW-0812">Transmembrane</keyword>
<keyword id="KW-1133">Transmembrane helix</keyword>
<keyword id="KW-0834">Unfolded protein response</keyword>